<feature type="chain" id="PRO_0000355892" description="Large ribosomal subunit protein uL14c">
    <location>
        <begin position="1"/>
        <end position="122"/>
    </location>
</feature>
<dbReference type="EMBL" id="AP009376">
    <property type="protein sequence ID" value="BAF50674.1"/>
    <property type="molecule type" value="Genomic_DNA"/>
</dbReference>
<dbReference type="RefSeq" id="YP_001123850.1">
    <property type="nucleotide sequence ID" value="NC_009275.1"/>
</dbReference>
<dbReference type="SMR" id="A4QLW9"/>
<dbReference type="GeneID" id="4962141"/>
<dbReference type="GO" id="GO:0009507">
    <property type="term" value="C:chloroplast"/>
    <property type="evidence" value="ECO:0007669"/>
    <property type="project" value="UniProtKB-SubCell"/>
</dbReference>
<dbReference type="GO" id="GO:0022625">
    <property type="term" value="C:cytosolic large ribosomal subunit"/>
    <property type="evidence" value="ECO:0007669"/>
    <property type="project" value="TreeGrafter"/>
</dbReference>
<dbReference type="GO" id="GO:0070180">
    <property type="term" value="F:large ribosomal subunit rRNA binding"/>
    <property type="evidence" value="ECO:0007669"/>
    <property type="project" value="TreeGrafter"/>
</dbReference>
<dbReference type="GO" id="GO:0003735">
    <property type="term" value="F:structural constituent of ribosome"/>
    <property type="evidence" value="ECO:0007669"/>
    <property type="project" value="InterPro"/>
</dbReference>
<dbReference type="GO" id="GO:0006412">
    <property type="term" value="P:translation"/>
    <property type="evidence" value="ECO:0007669"/>
    <property type="project" value="UniProtKB-UniRule"/>
</dbReference>
<dbReference type="CDD" id="cd00337">
    <property type="entry name" value="Ribosomal_uL14"/>
    <property type="match status" value="1"/>
</dbReference>
<dbReference type="FunFam" id="2.40.150.20:FF:000002">
    <property type="entry name" value="50S ribosomal protein L14, chloroplastic"/>
    <property type="match status" value="1"/>
</dbReference>
<dbReference type="Gene3D" id="2.40.150.20">
    <property type="entry name" value="Ribosomal protein L14"/>
    <property type="match status" value="1"/>
</dbReference>
<dbReference type="HAMAP" id="MF_01367">
    <property type="entry name" value="Ribosomal_uL14"/>
    <property type="match status" value="1"/>
</dbReference>
<dbReference type="InterPro" id="IPR000218">
    <property type="entry name" value="Ribosomal_uL14"/>
</dbReference>
<dbReference type="InterPro" id="IPR005745">
    <property type="entry name" value="Ribosomal_uL14_bac-type"/>
</dbReference>
<dbReference type="InterPro" id="IPR019972">
    <property type="entry name" value="Ribosomal_uL14_CS"/>
</dbReference>
<dbReference type="InterPro" id="IPR036853">
    <property type="entry name" value="Ribosomal_uL14_sf"/>
</dbReference>
<dbReference type="NCBIfam" id="TIGR01067">
    <property type="entry name" value="rplN_bact"/>
    <property type="match status" value="1"/>
</dbReference>
<dbReference type="PANTHER" id="PTHR11761">
    <property type="entry name" value="50S/60S RIBOSOMAL PROTEIN L14/L23"/>
    <property type="match status" value="1"/>
</dbReference>
<dbReference type="PANTHER" id="PTHR11761:SF3">
    <property type="entry name" value="LARGE RIBOSOMAL SUBUNIT PROTEIN UL14M"/>
    <property type="match status" value="1"/>
</dbReference>
<dbReference type="Pfam" id="PF00238">
    <property type="entry name" value="Ribosomal_L14"/>
    <property type="match status" value="1"/>
</dbReference>
<dbReference type="SMART" id="SM01374">
    <property type="entry name" value="Ribosomal_L14"/>
    <property type="match status" value="1"/>
</dbReference>
<dbReference type="SUPFAM" id="SSF50193">
    <property type="entry name" value="Ribosomal protein L14"/>
    <property type="match status" value="1"/>
</dbReference>
<dbReference type="PROSITE" id="PS00049">
    <property type="entry name" value="RIBOSOMAL_L14"/>
    <property type="match status" value="1"/>
</dbReference>
<accession>A4QLW9</accession>
<gene>
    <name evidence="1" type="primary">rpl14</name>
</gene>
<comment type="function">
    <text evidence="1">Binds to 23S rRNA.</text>
</comment>
<comment type="subunit">
    <text evidence="1">Part of the 50S ribosomal subunit.</text>
</comment>
<comment type="subcellular location">
    <subcellularLocation>
        <location>Plastid</location>
        <location>Chloroplast</location>
    </subcellularLocation>
</comment>
<comment type="similarity">
    <text evidence="1">Belongs to the universal ribosomal protein uL14 family.</text>
</comment>
<geneLocation type="chloroplast"/>
<proteinExistence type="inferred from homology"/>
<evidence type="ECO:0000255" key="1">
    <source>
        <dbReference type="HAMAP-Rule" id="MF_01367"/>
    </source>
</evidence>
<evidence type="ECO:0000305" key="2"/>
<reference key="1">
    <citation type="submission" date="2007-03" db="EMBL/GenBank/DDBJ databases">
        <title>Sequencing analysis of Nasturtium officinale chloroplast DNA.</title>
        <authorList>
            <person name="Hosouchi T."/>
            <person name="Tsuruoka H."/>
            <person name="Kotani H."/>
        </authorList>
    </citation>
    <scope>NUCLEOTIDE SEQUENCE [LARGE SCALE GENOMIC DNA]</scope>
</reference>
<name>RK14_NASOF</name>
<protein>
    <recommendedName>
        <fullName evidence="1">Large ribosomal subunit protein uL14c</fullName>
    </recommendedName>
    <alternativeName>
        <fullName evidence="2">50S ribosomal protein L14, chloroplastic</fullName>
    </alternativeName>
</protein>
<organism>
    <name type="scientific">Nasturtium officinale</name>
    <name type="common">Watercress</name>
    <name type="synonym">Rorippa nasturtium-aquaticum</name>
    <dbReference type="NCBI Taxonomy" id="65948"/>
    <lineage>
        <taxon>Eukaryota</taxon>
        <taxon>Viridiplantae</taxon>
        <taxon>Streptophyta</taxon>
        <taxon>Embryophyta</taxon>
        <taxon>Tracheophyta</taxon>
        <taxon>Spermatophyta</taxon>
        <taxon>Magnoliopsida</taxon>
        <taxon>eudicotyledons</taxon>
        <taxon>Gunneridae</taxon>
        <taxon>Pentapetalae</taxon>
        <taxon>rosids</taxon>
        <taxon>malvids</taxon>
        <taxon>Brassicales</taxon>
        <taxon>Brassicaceae</taxon>
        <taxon>Cardamineae</taxon>
        <taxon>Nasturtium</taxon>
    </lineage>
</organism>
<keyword id="KW-0150">Chloroplast</keyword>
<keyword id="KW-0934">Plastid</keyword>
<keyword id="KW-0687">Ribonucleoprotein</keyword>
<keyword id="KW-0689">Ribosomal protein</keyword>
<keyword id="KW-0694">RNA-binding</keyword>
<keyword id="KW-0699">rRNA-binding</keyword>
<sequence>MIQPQTYLNVADNSGARELMCIRIIGASNRRYAHIGDVIVAVIKEAIPNTPLERSEVIRAVIVRTCKELKRNNGTIIRYDDNAAVVIDQEGNPKGTRVFGAIPRELRQLNFTKIVSLAPEVL</sequence>